<organism>
    <name type="scientific">Parasynechococcus marenigrum (strain WH8102)</name>
    <dbReference type="NCBI Taxonomy" id="84588"/>
    <lineage>
        <taxon>Bacteria</taxon>
        <taxon>Bacillati</taxon>
        <taxon>Cyanobacteriota</taxon>
        <taxon>Cyanophyceae</taxon>
        <taxon>Synechococcales</taxon>
        <taxon>Prochlorococcaceae</taxon>
        <taxon>Parasynechococcus</taxon>
        <taxon>Parasynechococcus marenigrum</taxon>
    </lineage>
</organism>
<keyword id="KW-0028">Amino-acid biosynthesis</keyword>
<keyword id="KW-0057">Aromatic amino acid biosynthesis</keyword>
<keyword id="KW-0210">Decarboxylase</keyword>
<keyword id="KW-0456">Lyase</keyword>
<keyword id="KW-0822">Tryptophan biosynthesis</keyword>
<comment type="catalytic activity">
    <reaction evidence="1">
        <text>1-(2-carboxyphenylamino)-1-deoxy-D-ribulose 5-phosphate + H(+) = (1S,2R)-1-C-(indol-3-yl)glycerol 3-phosphate + CO2 + H2O</text>
        <dbReference type="Rhea" id="RHEA:23476"/>
        <dbReference type="ChEBI" id="CHEBI:15377"/>
        <dbReference type="ChEBI" id="CHEBI:15378"/>
        <dbReference type="ChEBI" id="CHEBI:16526"/>
        <dbReference type="ChEBI" id="CHEBI:58613"/>
        <dbReference type="ChEBI" id="CHEBI:58866"/>
        <dbReference type="EC" id="4.1.1.48"/>
    </reaction>
</comment>
<comment type="pathway">
    <text evidence="1">Amino-acid biosynthesis; L-tryptophan biosynthesis; L-tryptophan from chorismate: step 4/5.</text>
</comment>
<comment type="similarity">
    <text evidence="1">Belongs to the TrpC family.</text>
</comment>
<evidence type="ECO:0000255" key="1">
    <source>
        <dbReference type="HAMAP-Rule" id="MF_00134"/>
    </source>
</evidence>
<reference key="1">
    <citation type="journal article" date="2003" name="Nature">
        <title>The genome of a motile marine Synechococcus.</title>
        <authorList>
            <person name="Palenik B."/>
            <person name="Brahamsha B."/>
            <person name="Larimer F.W."/>
            <person name="Land M.L."/>
            <person name="Hauser L."/>
            <person name="Chain P."/>
            <person name="Lamerdin J.E."/>
            <person name="Regala W."/>
            <person name="Allen E.E."/>
            <person name="McCarren J."/>
            <person name="Paulsen I.T."/>
            <person name="Dufresne A."/>
            <person name="Partensky F."/>
            <person name="Webb E.A."/>
            <person name="Waterbury J."/>
        </authorList>
    </citation>
    <scope>NUCLEOTIDE SEQUENCE [LARGE SCALE GENOMIC DNA]</scope>
    <source>
        <strain>WH8102</strain>
    </source>
</reference>
<proteinExistence type="inferred from homology"/>
<dbReference type="EC" id="4.1.1.48" evidence="1"/>
<dbReference type="EMBL" id="BX569693">
    <property type="protein sequence ID" value="CAE08144.1"/>
    <property type="molecule type" value="Genomic_DNA"/>
</dbReference>
<dbReference type="RefSeq" id="WP_011128493.1">
    <property type="nucleotide sequence ID" value="NC_005070.1"/>
</dbReference>
<dbReference type="SMR" id="Q7TTU3"/>
<dbReference type="STRING" id="84588.SYNW1629"/>
<dbReference type="KEGG" id="syw:SYNW1629"/>
<dbReference type="eggNOG" id="COG0134">
    <property type="taxonomic scope" value="Bacteria"/>
</dbReference>
<dbReference type="HOGENOM" id="CLU_034247_1_0_3"/>
<dbReference type="UniPathway" id="UPA00035">
    <property type="reaction ID" value="UER00043"/>
</dbReference>
<dbReference type="Proteomes" id="UP000001422">
    <property type="component" value="Chromosome"/>
</dbReference>
<dbReference type="GO" id="GO:0004425">
    <property type="term" value="F:indole-3-glycerol-phosphate synthase activity"/>
    <property type="evidence" value="ECO:0007669"/>
    <property type="project" value="UniProtKB-UniRule"/>
</dbReference>
<dbReference type="GO" id="GO:0004640">
    <property type="term" value="F:phosphoribosylanthranilate isomerase activity"/>
    <property type="evidence" value="ECO:0007669"/>
    <property type="project" value="TreeGrafter"/>
</dbReference>
<dbReference type="GO" id="GO:0000162">
    <property type="term" value="P:L-tryptophan biosynthetic process"/>
    <property type="evidence" value="ECO:0007669"/>
    <property type="project" value="UniProtKB-UniRule"/>
</dbReference>
<dbReference type="CDD" id="cd00331">
    <property type="entry name" value="IGPS"/>
    <property type="match status" value="1"/>
</dbReference>
<dbReference type="FunFam" id="3.20.20.70:FF:000024">
    <property type="entry name" value="Indole-3-glycerol phosphate synthase"/>
    <property type="match status" value="1"/>
</dbReference>
<dbReference type="Gene3D" id="3.20.20.70">
    <property type="entry name" value="Aldolase class I"/>
    <property type="match status" value="1"/>
</dbReference>
<dbReference type="HAMAP" id="MF_00134_B">
    <property type="entry name" value="IGPS_B"/>
    <property type="match status" value="1"/>
</dbReference>
<dbReference type="InterPro" id="IPR013785">
    <property type="entry name" value="Aldolase_TIM"/>
</dbReference>
<dbReference type="InterPro" id="IPR045186">
    <property type="entry name" value="Indole-3-glycerol_P_synth"/>
</dbReference>
<dbReference type="InterPro" id="IPR013798">
    <property type="entry name" value="Indole-3-glycerol_P_synth_dom"/>
</dbReference>
<dbReference type="InterPro" id="IPR001468">
    <property type="entry name" value="Indole-3-GlycerolPSynthase_CS"/>
</dbReference>
<dbReference type="InterPro" id="IPR011060">
    <property type="entry name" value="RibuloseP-bd_barrel"/>
</dbReference>
<dbReference type="NCBIfam" id="NF001372">
    <property type="entry name" value="PRK00278.1-4"/>
    <property type="match status" value="1"/>
</dbReference>
<dbReference type="NCBIfam" id="NF001377">
    <property type="entry name" value="PRK00278.2-4"/>
    <property type="match status" value="1"/>
</dbReference>
<dbReference type="PANTHER" id="PTHR22854:SF2">
    <property type="entry name" value="INDOLE-3-GLYCEROL-PHOSPHATE SYNTHASE"/>
    <property type="match status" value="1"/>
</dbReference>
<dbReference type="PANTHER" id="PTHR22854">
    <property type="entry name" value="TRYPTOPHAN BIOSYNTHESIS PROTEIN"/>
    <property type="match status" value="1"/>
</dbReference>
<dbReference type="Pfam" id="PF00218">
    <property type="entry name" value="IGPS"/>
    <property type="match status" value="1"/>
</dbReference>
<dbReference type="SUPFAM" id="SSF51366">
    <property type="entry name" value="Ribulose-phoshate binding barrel"/>
    <property type="match status" value="1"/>
</dbReference>
<dbReference type="PROSITE" id="PS00614">
    <property type="entry name" value="IGPS"/>
    <property type="match status" value="1"/>
</dbReference>
<name>TRPC_PARMW</name>
<sequence>MEIRRRPPNPKVRVAHLEYAVPHDEEEPKNILEKIVWAKDREVDAARERVPLQTLKRQIEDLPPTRDFLAALREAPVQPAVIAEVKKASPSKGVIREDFDPVAIAEAYAAGGARCLSVLTDKTFFQGGFDVLVEVRQAVDLPLLCKEFVLSPYQLFQARAAGADAVLLIAAILTDQDLQYLKKAAAALGLDVLVEVHDAAELERVLNLGGFPLIGINNRDLTSFETDLSTTEQLMERFGDRLQDQGSLLVSESGLFDRSDLDRVKAAGADAVLVGEALMRQQDVQSALTNLIHG</sequence>
<feature type="chain" id="PRO_1000018559" description="Indole-3-glycerol phosphate synthase">
    <location>
        <begin position="1"/>
        <end position="294"/>
    </location>
</feature>
<protein>
    <recommendedName>
        <fullName evidence="1">Indole-3-glycerol phosphate synthase</fullName>
        <shortName evidence="1">IGPS</shortName>
        <ecNumber evidence="1">4.1.1.48</ecNumber>
    </recommendedName>
</protein>
<gene>
    <name evidence="1" type="primary">trpC</name>
    <name type="ordered locus">SYNW1629</name>
</gene>
<accession>Q7TTU3</accession>